<feature type="chain" id="PRO_0000144378" description="ATP synthase subunit alpha, chloroplastic">
    <location>
        <begin position="1"/>
        <end position="510"/>
    </location>
</feature>
<feature type="binding site" evidence="1">
    <location>
        <begin position="170"/>
        <end position="177"/>
    </location>
    <ligand>
        <name>ATP</name>
        <dbReference type="ChEBI" id="CHEBI:30616"/>
    </ligand>
</feature>
<feature type="site" description="Required for activity" evidence="1">
    <location>
        <position position="363"/>
    </location>
</feature>
<sequence>MVTIRADEISKIIRERIEQYNTEIKIVNTGTVLQVGDGIARIYGLDEVMAGELVEFEEGTIGIALNLESKNVGVVLMGDGLMIQEGSSVKATGRIAQIPVSEGYLGRVINALAKPIDGRGEISSSESRLIESPAPGIISRRSVYEPLQTGLIAIDSMIPIGRGQRELIIGDRQTGKTAVATDTILNQQGQNVICVYVAVGQKASSVAQVVNTLQERGAMEYTIVVAETADSPATLQYLAPYTGAALAEFFMYRERHTLIIYDDLSKQAQAYRQMSLLLRRPPGREAYPGDVFYLHSRLLERAAKLSSQLGEGSMTALPIVETQSGDVSAYIPTNVISITDGQIFLSADLFNAGIRPAINVGISVSRVGSAAQIKAMKQVAGKLKLELAQFAELEAFAQFASDLDKATQNQLARGQRLRELLKQSQSAPLTVEEQVITIYTGTNGYLDSLEIRQVRKFLVELRAYLKTNKPQFNEIISSTKTFTGEAEALLKEAIQEQMELFLLQEQVEKN</sequence>
<comment type="function">
    <text>Produces ATP from ADP in the presence of a proton gradient across the membrane. The alpha chain is a regulatory subunit.</text>
</comment>
<comment type="catalytic activity">
    <reaction evidence="1">
        <text>ATP + H2O + 4 H(+)(in) = ADP + phosphate + 5 H(+)(out)</text>
        <dbReference type="Rhea" id="RHEA:57720"/>
        <dbReference type="ChEBI" id="CHEBI:15377"/>
        <dbReference type="ChEBI" id="CHEBI:15378"/>
        <dbReference type="ChEBI" id="CHEBI:30616"/>
        <dbReference type="ChEBI" id="CHEBI:43474"/>
        <dbReference type="ChEBI" id="CHEBI:456216"/>
        <dbReference type="EC" id="7.1.2.2"/>
    </reaction>
</comment>
<comment type="subunit">
    <text evidence="1">F-type ATPases have 2 components, CF(1) - the catalytic core - and CF(0) - the membrane proton channel. CF(1) has five subunits: alpha(3), beta(3), gamma(1), delta(1), epsilon(1). CF(0) has four main subunits: a, b, b' and c.</text>
</comment>
<comment type="subcellular location">
    <subcellularLocation>
        <location evidence="1">Plastid</location>
        <location evidence="1">Chloroplast thylakoid membrane</location>
        <topology evidence="1">Peripheral membrane protein</topology>
    </subcellularLocation>
</comment>
<comment type="similarity">
    <text evidence="1">Belongs to the ATPase alpha/beta chains family.</text>
</comment>
<dbReference type="EC" id="7.1.2.2" evidence="1"/>
<dbReference type="EMBL" id="AP002983">
    <property type="protein sequence ID" value="BAB33201.1"/>
    <property type="molecule type" value="Genomic_DNA"/>
</dbReference>
<dbReference type="RefSeq" id="NP_084803.1">
    <property type="nucleotide sequence ID" value="NC_002694.1"/>
</dbReference>
<dbReference type="SMR" id="Q9BBS3"/>
<dbReference type="GeneID" id="802852"/>
<dbReference type="OMA" id="WRISHIR"/>
<dbReference type="GO" id="GO:0009535">
    <property type="term" value="C:chloroplast thylakoid membrane"/>
    <property type="evidence" value="ECO:0007669"/>
    <property type="project" value="UniProtKB-SubCell"/>
</dbReference>
<dbReference type="GO" id="GO:0045259">
    <property type="term" value="C:proton-transporting ATP synthase complex"/>
    <property type="evidence" value="ECO:0007669"/>
    <property type="project" value="UniProtKB-KW"/>
</dbReference>
<dbReference type="GO" id="GO:0043531">
    <property type="term" value="F:ADP binding"/>
    <property type="evidence" value="ECO:0007669"/>
    <property type="project" value="TreeGrafter"/>
</dbReference>
<dbReference type="GO" id="GO:0005524">
    <property type="term" value="F:ATP binding"/>
    <property type="evidence" value="ECO:0007669"/>
    <property type="project" value="UniProtKB-UniRule"/>
</dbReference>
<dbReference type="GO" id="GO:0046933">
    <property type="term" value="F:proton-transporting ATP synthase activity, rotational mechanism"/>
    <property type="evidence" value="ECO:0007669"/>
    <property type="project" value="UniProtKB-UniRule"/>
</dbReference>
<dbReference type="CDD" id="cd18113">
    <property type="entry name" value="ATP-synt_F1_alpha_C"/>
    <property type="match status" value="1"/>
</dbReference>
<dbReference type="CDD" id="cd18116">
    <property type="entry name" value="ATP-synt_F1_alpha_N"/>
    <property type="match status" value="1"/>
</dbReference>
<dbReference type="CDD" id="cd01132">
    <property type="entry name" value="F1-ATPase_alpha_CD"/>
    <property type="match status" value="1"/>
</dbReference>
<dbReference type="FunFam" id="1.20.150.20:FF:000001">
    <property type="entry name" value="ATP synthase subunit alpha"/>
    <property type="match status" value="1"/>
</dbReference>
<dbReference type="FunFam" id="2.40.30.20:FF:000001">
    <property type="entry name" value="ATP synthase subunit alpha"/>
    <property type="match status" value="1"/>
</dbReference>
<dbReference type="FunFam" id="3.40.50.300:FF:000002">
    <property type="entry name" value="ATP synthase subunit alpha"/>
    <property type="match status" value="1"/>
</dbReference>
<dbReference type="Gene3D" id="2.40.30.20">
    <property type="match status" value="1"/>
</dbReference>
<dbReference type="Gene3D" id="1.20.150.20">
    <property type="entry name" value="ATP synthase alpha/beta chain, C-terminal domain"/>
    <property type="match status" value="1"/>
</dbReference>
<dbReference type="Gene3D" id="3.40.50.300">
    <property type="entry name" value="P-loop containing nucleotide triphosphate hydrolases"/>
    <property type="match status" value="1"/>
</dbReference>
<dbReference type="HAMAP" id="MF_01346">
    <property type="entry name" value="ATP_synth_alpha_bact"/>
    <property type="match status" value="1"/>
</dbReference>
<dbReference type="InterPro" id="IPR023366">
    <property type="entry name" value="ATP_synth_asu-like_sf"/>
</dbReference>
<dbReference type="InterPro" id="IPR000793">
    <property type="entry name" value="ATP_synth_asu_C"/>
</dbReference>
<dbReference type="InterPro" id="IPR038376">
    <property type="entry name" value="ATP_synth_asu_C_sf"/>
</dbReference>
<dbReference type="InterPro" id="IPR033732">
    <property type="entry name" value="ATP_synth_F1_a_nt-bd_dom"/>
</dbReference>
<dbReference type="InterPro" id="IPR005294">
    <property type="entry name" value="ATP_synth_F1_asu"/>
</dbReference>
<dbReference type="InterPro" id="IPR020003">
    <property type="entry name" value="ATPase_a/bsu_AS"/>
</dbReference>
<dbReference type="InterPro" id="IPR004100">
    <property type="entry name" value="ATPase_F1/V1/A1_a/bsu_N"/>
</dbReference>
<dbReference type="InterPro" id="IPR036121">
    <property type="entry name" value="ATPase_F1/V1/A1_a/bsu_N_sf"/>
</dbReference>
<dbReference type="InterPro" id="IPR000194">
    <property type="entry name" value="ATPase_F1/V1/A1_a/bsu_nucl-bd"/>
</dbReference>
<dbReference type="InterPro" id="IPR027417">
    <property type="entry name" value="P-loop_NTPase"/>
</dbReference>
<dbReference type="NCBIfam" id="TIGR00962">
    <property type="entry name" value="atpA"/>
    <property type="match status" value="1"/>
</dbReference>
<dbReference type="NCBIfam" id="NF009884">
    <property type="entry name" value="PRK13343.1"/>
    <property type="match status" value="1"/>
</dbReference>
<dbReference type="PANTHER" id="PTHR48082">
    <property type="entry name" value="ATP SYNTHASE SUBUNIT ALPHA, MITOCHONDRIAL"/>
    <property type="match status" value="1"/>
</dbReference>
<dbReference type="PANTHER" id="PTHR48082:SF2">
    <property type="entry name" value="ATP SYNTHASE SUBUNIT ALPHA, MITOCHONDRIAL"/>
    <property type="match status" value="1"/>
</dbReference>
<dbReference type="Pfam" id="PF00006">
    <property type="entry name" value="ATP-synt_ab"/>
    <property type="match status" value="1"/>
</dbReference>
<dbReference type="Pfam" id="PF00306">
    <property type="entry name" value="ATP-synt_ab_C"/>
    <property type="match status" value="1"/>
</dbReference>
<dbReference type="Pfam" id="PF02874">
    <property type="entry name" value="ATP-synt_ab_N"/>
    <property type="match status" value="1"/>
</dbReference>
<dbReference type="PIRSF" id="PIRSF039088">
    <property type="entry name" value="F_ATPase_subunit_alpha"/>
    <property type="match status" value="1"/>
</dbReference>
<dbReference type="SUPFAM" id="SSF47917">
    <property type="entry name" value="C-terminal domain of alpha and beta subunits of F1 ATP synthase"/>
    <property type="match status" value="1"/>
</dbReference>
<dbReference type="SUPFAM" id="SSF50615">
    <property type="entry name" value="N-terminal domain of alpha and beta subunits of F1 ATP synthase"/>
    <property type="match status" value="1"/>
</dbReference>
<dbReference type="SUPFAM" id="SSF52540">
    <property type="entry name" value="P-loop containing nucleoside triphosphate hydrolases"/>
    <property type="match status" value="1"/>
</dbReference>
<dbReference type="PROSITE" id="PS00152">
    <property type="entry name" value="ATPASE_ALPHA_BETA"/>
    <property type="match status" value="1"/>
</dbReference>
<name>ATPA_LOTJA</name>
<reference key="1">
    <citation type="journal article" date="2000" name="DNA Res.">
        <title>Complete structure of the chloroplast genome of a legume, Lotus japonicus.</title>
        <authorList>
            <person name="Kato T."/>
            <person name="Kaneko T."/>
            <person name="Sato S."/>
            <person name="Nakamura Y."/>
            <person name="Tabata S."/>
        </authorList>
    </citation>
    <scope>NUCLEOTIDE SEQUENCE [LARGE SCALE GENOMIC DNA]</scope>
    <source>
        <strain>cv. Miyakojima MG-20</strain>
    </source>
</reference>
<protein>
    <recommendedName>
        <fullName evidence="1">ATP synthase subunit alpha, chloroplastic</fullName>
        <ecNumber evidence="1">7.1.2.2</ecNumber>
    </recommendedName>
    <alternativeName>
        <fullName evidence="1">ATP synthase F1 sector subunit alpha</fullName>
    </alternativeName>
    <alternativeName>
        <fullName evidence="1">F-ATPase subunit alpha</fullName>
    </alternativeName>
</protein>
<accession>Q9BBS3</accession>
<geneLocation type="chloroplast"/>
<gene>
    <name evidence="1" type="primary">atpA</name>
</gene>
<proteinExistence type="inferred from homology"/>
<organism>
    <name type="scientific">Lotus japonicus</name>
    <name type="common">Lotus corniculatus var. japonicus</name>
    <dbReference type="NCBI Taxonomy" id="34305"/>
    <lineage>
        <taxon>Eukaryota</taxon>
        <taxon>Viridiplantae</taxon>
        <taxon>Streptophyta</taxon>
        <taxon>Embryophyta</taxon>
        <taxon>Tracheophyta</taxon>
        <taxon>Spermatophyta</taxon>
        <taxon>Magnoliopsida</taxon>
        <taxon>eudicotyledons</taxon>
        <taxon>Gunneridae</taxon>
        <taxon>Pentapetalae</taxon>
        <taxon>rosids</taxon>
        <taxon>fabids</taxon>
        <taxon>Fabales</taxon>
        <taxon>Fabaceae</taxon>
        <taxon>Papilionoideae</taxon>
        <taxon>50 kb inversion clade</taxon>
        <taxon>NPAAA clade</taxon>
        <taxon>Hologalegina</taxon>
        <taxon>robinioid clade</taxon>
        <taxon>Loteae</taxon>
        <taxon>Lotus</taxon>
    </lineage>
</organism>
<keyword id="KW-0066">ATP synthesis</keyword>
<keyword id="KW-0067">ATP-binding</keyword>
<keyword id="KW-0139">CF(1)</keyword>
<keyword id="KW-0150">Chloroplast</keyword>
<keyword id="KW-0375">Hydrogen ion transport</keyword>
<keyword id="KW-0406">Ion transport</keyword>
<keyword id="KW-0472">Membrane</keyword>
<keyword id="KW-0547">Nucleotide-binding</keyword>
<keyword id="KW-0934">Plastid</keyword>
<keyword id="KW-0793">Thylakoid</keyword>
<keyword id="KW-1278">Translocase</keyword>
<keyword id="KW-0813">Transport</keyword>
<evidence type="ECO:0000255" key="1">
    <source>
        <dbReference type="HAMAP-Rule" id="MF_01346"/>
    </source>
</evidence>